<evidence type="ECO:0000250" key="1"/>
<evidence type="ECO:0000255" key="2"/>
<evidence type="ECO:0000255" key="3">
    <source>
        <dbReference type="PROSITE-ProRule" id="PRU00972"/>
    </source>
</evidence>
<evidence type="ECO:0000256" key="4">
    <source>
        <dbReference type="SAM" id="MobiDB-lite"/>
    </source>
</evidence>
<evidence type="ECO:0000305" key="5"/>
<name>EAF3_CANGA</name>
<reference key="1">
    <citation type="journal article" date="2004" name="Nature">
        <title>Genome evolution in yeasts.</title>
        <authorList>
            <person name="Dujon B."/>
            <person name="Sherman D."/>
            <person name="Fischer G."/>
            <person name="Durrens P."/>
            <person name="Casaregola S."/>
            <person name="Lafontaine I."/>
            <person name="de Montigny J."/>
            <person name="Marck C."/>
            <person name="Neuveglise C."/>
            <person name="Talla E."/>
            <person name="Goffard N."/>
            <person name="Frangeul L."/>
            <person name="Aigle M."/>
            <person name="Anthouard V."/>
            <person name="Babour A."/>
            <person name="Barbe V."/>
            <person name="Barnay S."/>
            <person name="Blanchin S."/>
            <person name="Beckerich J.-M."/>
            <person name="Beyne E."/>
            <person name="Bleykasten C."/>
            <person name="Boisrame A."/>
            <person name="Boyer J."/>
            <person name="Cattolico L."/>
            <person name="Confanioleri F."/>
            <person name="de Daruvar A."/>
            <person name="Despons L."/>
            <person name="Fabre E."/>
            <person name="Fairhead C."/>
            <person name="Ferry-Dumazet H."/>
            <person name="Groppi A."/>
            <person name="Hantraye F."/>
            <person name="Hennequin C."/>
            <person name="Jauniaux N."/>
            <person name="Joyet P."/>
            <person name="Kachouri R."/>
            <person name="Kerrest A."/>
            <person name="Koszul R."/>
            <person name="Lemaire M."/>
            <person name="Lesur I."/>
            <person name="Ma L."/>
            <person name="Muller H."/>
            <person name="Nicaud J.-M."/>
            <person name="Nikolski M."/>
            <person name="Oztas S."/>
            <person name="Ozier-Kalogeropoulos O."/>
            <person name="Pellenz S."/>
            <person name="Potier S."/>
            <person name="Richard G.-F."/>
            <person name="Straub M.-L."/>
            <person name="Suleau A."/>
            <person name="Swennen D."/>
            <person name="Tekaia F."/>
            <person name="Wesolowski-Louvel M."/>
            <person name="Westhof E."/>
            <person name="Wirth B."/>
            <person name="Zeniou-Meyer M."/>
            <person name="Zivanovic Y."/>
            <person name="Bolotin-Fukuhara M."/>
            <person name="Thierry A."/>
            <person name="Bouchier C."/>
            <person name="Caudron B."/>
            <person name="Scarpelli C."/>
            <person name="Gaillardin C."/>
            <person name="Weissenbach J."/>
            <person name="Wincker P."/>
            <person name="Souciet J.-L."/>
        </authorList>
    </citation>
    <scope>NUCLEOTIDE SEQUENCE [LARGE SCALE GENOMIC DNA]</scope>
    <source>
        <strain>ATCC 2001 / BCRC 20586 / JCM 3761 / NBRC 0622 / NRRL Y-65 / CBS 138</strain>
    </source>
</reference>
<dbReference type="EMBL" id="CR380957">
    <property type="protein sequence ID" value="CAG61287.1"/>
    <property type="molecule type" value="Genomic_DNA"/>
</dbReference>
<dbReference type="RefSeq" id="XP_448326.1">
    <property type="nucleotide sequence ID" value="XM_448326.1"/>
</dbReference>
<dbReference type="SMR" id="Q6FN68"/>
<dbReference type="FunCoup" id="Q6FN68">
    <property type="interactions" value="758"/>
</dbReference>
<dbReference type="STRING" id="284593.Q6FN68"/>
<dbReference type="EnsemblFungi" id="CAGL0K02321g-T">
    <property type="protein sequence ID" value="CAGL0K02321g-T-p1"/>
    <property type="gene ID" value="CAGL0K02321g"/>
</dbReference>
<dbReference type="KEGG" id="cgr:2890303"/>
<dbReference type="CGD" id="CAL0134779">
    <property type="gene designation" value="CAGL0K02321g"/>
</dbReference>
<dbReference type="VEuPathDB" id="FungiDB:CAGL0K02321g"/>
<dbReference type="eggNOG" id="KOG3001">
    <property type="taxonomic scope" value="Eukaryota"/>
</dbReference>
<dbReference type="HOGENOM" id="CLU_039566_1_1_1"/>
<dbReference type="InParanoid" id="Q6FN68"/>
<dbReference type="OMA" id="HKFFDIE"/>
<dbReference type="Proteomes" id="UP000002428">
    <property type="component" value="Chromosome K"/>
</dbReference>
<dbReference type="GO" id="GO:0035267">
    <property type="term" value="C:NuA4 histone acetyltransferase complex"/>
    <property type="evidence" value="ECO:0007669"/>
    <property type="project" value="EnsemblFungi"/>
</dbReference>
<dbReference type="GO" id="GO:1990453">
    <property type="term" value="C:nucleosome disassembly/reassembly complex"/>
    <property type="evidence" value="ECO:0007669"/>
    <property type="project" value="EnsemblFungi"/>
</dbReference>
<dbReference type="GO" id="GO:0032221">
    <property type="term" value="C:Rpd3S complex"/>
    <property type="evidence" value="ECO:0007669"/>
    <property type="project" value="EnsemblFungi"/>
</dbReference>
<dbReference type="GO" id="GO:0140566">
    <property type="term" value="F:histone reader activity"/>
    <property type="evidence" value="ECO:0007669"/>
    <property type="project" value="EnsemblFungi"/>
</dbReference>
<dbReference type="GO" id="GO:0035064">
    <property type="term" value="F:methylated histone binding"/>
    <property type="evidence" value="ECO:0007669"/>
    <property type="project" value="EnsemblFungi"/>
</dbReference>
<dbReference type="GO" id="GO:0006281">
    <property type="term" value="P:DNA repair"/>
    <property type="evidence" value="ECO:0007669"/>
    <property type="project" value="UniProtKB-KW"/>
</dbReference>
<dbReference type="GO" id="GO:0006335">
    <property type="term" value="P:DNA replication-dependent chromatin assembly"/>
    <property type="evidence" value="ECO:0007669"/>
    <property type="project" value="EnsemblFungi"/>
</dbReference>
<dbReference type="GO" id="GO:0060195">
    <property type="term" value="P:negative regulation of antisense RNA transcription"/>
    <property type="evidence" value="ECO:0007669"/>
    <property type="project" value="EnsemblFungi"/>
</dbReference>
<dbReference type="GO" id="GO:0006337">
    <property type="term" value="P:nucleosome disassembly"/>
    <property type="evidence" value="ECO:0007669"/>
    <property type="project" value="EnsemblFungi"/>
</dbReference>
<dbReference type="GO" id="GO:0032968">
    <property type="term" value="P:positive regulation of transcription elongation by RNA polymerase II"/>
    <property type="evidence" value="ECO:0007669"/>
    <property type="project" value="EnsemblFungi"/>
</dbReference>
<dbReference type="GO" id="GO:0030174">
    <property type="term" value="P:regulation of DNA-templated DNA replication initiation"/>
    <property type="evidence" value="ECO:0007669"/>
    <property type="project" value="EnsemblFungi"/>
</dbReference>
<dbReference type="GO" id="GO:0043487">
    <property type="term" value="P:regulation of RNA stability"/>
    <property type="evidence" value="ECO:0007669"/>
    <property type="project" value="EnsemblFungi"/>
</dbReference>
<dbReference type="GO" id="GO:0006368">
    <property type="term" value="P:transcription elongation by RNA polymerase II"/>
    <property type="evidence" value="ECO:0007669"/>
    <property type="project" value="EnsemblFungi"/>
</dbReference>
<dbReference type="Gene3D" id="2.30.30.140">
    <property type="match status" value="1"/>
</dbReference>
<dbReference type="Gene3D" id="1.10.274.30">
    <property type="entry name" value="MRG domain"/>
    <property type="match status" value="1"/>
</dbReference>
<dbReference type="InterPro" id="IPR016197">
    <property type="entry name" value="Chromo-like_dom_sf"/>
</dbReference>
<dbReference type="InterPro" id="IPR000953">
    <property type="entry name" value="Chromo/chromo_shadow_dom"/>
</dbReference>
<dbReference type="InterPro" id="IPR008676">
    <property type="entry name" value="MRG"/>
</dbReference>
<dbReference type="InterPro" id="IPR038217">
    <property type="entry name" value="MRG_C_sf"/>
</dbReference>
<dbReference type="InterPro" id="IPR026541">
    <property type="entry name" value="MRG_dom"/>
</dbReference>
<dbReference type="InterPro" id="IPR053820">
    <property type="entry name" value="MSL3_chromo-like"/>
</dbReference>
<dbReference type="PANTHER" id="PTHR10880">
    <property type="entry name" value="MORTALITY FACTOR 4-LIKE PROTEIN"/>
    <property type="match status" value="1"/>
</dbReference>
<dbReference type="PANTHER" id="PTHR10880:SF15">
    <property type="entry name" value="MSL COMPLEX SUBUNIT 3"/>
    <property type="match status" value="1"/>
</dbReference>
<dbReference type="Pfam" id="PF05712">
    <property type="entry name" value="MRG"/>
    <property type="match status" value="1"/>
</dbReference>
<dbReference type="Pfam" id="PF22732">
    <property type="entry name" value="MSL3_chromo-like"/>
    <property type="match status" value="1"/>
</dbReference>
<dbReference type="PIRSF" id="PIRSF038133">
    <property type="entry name" value="HAT_Nua4_EAF3/MRG15"/>
    <property type="match status" value="1"/>
</dbReference>
<dbReference type="SMART" id="SM00298">
    <property type="entry name" value="CHROMO"/>
    <property type="match status" value="1"/>
</dbReference>
<dbReference type="SUPFAM" id="SSF54160">
    <property type="entry name" value="Chromo domain-like"/>
    <property type="match status" value="1"/>
</dbReference>
<dbReference type="PROSITE" id="PS51640">
    <property type="entry name" value="MRG"/>
    <property type="match status" value="1"/>
</dbReference>
<keyword id="KW-0156">Chromatin regulator</keyword>
<keyword id="KW-0227">DNA damage</keyword>
<keyword id="KW-0234">DNA repair</keyword>
<keyword id="KW-0539">Nucleus</keyword>
<keyword id="KW-1185">Reference proteome</keyword>
<keyword id="KW-0804">Transcription</keyword>
<keyword id="KW-0805">Transcription regulation</keyword>
<proteinExistence type="inferred from homology"/>
<organism>
    <name type="scientific">Candida glabrata (strain ATCC 2001 / BCRC 20586 / JCM 3761 / NBRC 0622 / NRRL Y-65 / CBS 138)</name>
    <name type="common">Yeast</name>
    <name type="synonym">Nakaseomyces glabratus</name>
    <dbReference type="NCBI Taxonomy" id="284593"/>
    <lineage>
        <taxon>Eukaryota</taxon>
        <taxon>Fungi</taxon>
        <taxon>Dikarya</taxon>
        <taxon>Ascomycota</taxon>
        <taxon>Saccharomycotina</taxon>
        <taxon>Saccharomycetes</taxon>
        <taxon>Saccharomycetales</taxon>
        <taxon>Saccharomycetaceae</taxon>
        <taxon>Nakaseomyces</taxon>
    </lineage>
</organism>
<accession>Q6FN68</accession>
<comment type="function">
    <text evidence="1">Involved in deacetylation of histones, chromatin assembly and chromosome segregation. May act as a transcriptional oscillator, directing histone deacetylases to specific chromosomal domains. Component of the NuA4 histone acetyltransferase complex which is involved in transcriptional activation of selected genes principally by acetylation of nucleosomal histone H4 and H2A. The NuA4 complex is also involved in DNA repair (By similarity).</text>
</comment>
<comment type="subunit">
    <text evidence="1">Component of the NuA4 histone acetyltransferase complex.</text>
</comment>
<comment type="subcellular location">
    <subcellularLocation>
        <location evidence="3">Nucleus</location>
    </subcellularLocation>
</comment>
<comment type="similarity">
    <text evidence="5">Belongs to the MRG family.</text>
</comment>
<feature type="chain" id="PRO_0000088775" description="Chromatin modification-related protein EAF3">
    <location>
        <begin position="1"/>
        <end position="355"/>
    </location>
</feature>
<feature type="domain" description="Tudor-knot" evidence="2">
    <location>
        <begin position="3"/>
        <end position="77"/>
    </location>
</feature>
<feature type="domain" description="MRG" evidence="3">
    <location>
        <begin position="163"/>
        <end position="353"/>
    </location>
</feature>
<feature type="region of interest" description="Disordered" evidence="4">
    <location>
        <begin position="98"/>
        <end position="150"/>
    </location>
</feature>
<feature type="compositionally biased region" description="Basic and acidic residues" evidence="4">
    <location>
        <begin position="131"/>
        <end position="144"/>
    </location>
</feature>
<protein>
    <recommendedName>
        <fullName>Chromatin modification-related protein EAF3</fullName>
    </recommendedName>
</protein>
<gene>
    <name type="primary">EAF3</name>
    <name type="ordered locus">CAGL0K02321g</name>
</gene>
<sequence length="355" mass="40740">MFEVGGKCLAYHGPLLYEAKILRRWNPKLEKVEYSVPLKSGEEDGLPESMNREEFYYYIHYQGWKSSWDEWVSVDRIMELTEANIELKKQLVMEAKKASLAQQQKTKNGGSAKRGGGGAHSESNHGGRRSGSGDRRDSNAEERGIVPSEGPFRTSSVMSYNFSRNKLRIHIPMILESMLVDDWEIVTKEKKISNLPNPFPVETILDRFYKDVATRTTSPVELSLVEEYVYGLKQYFNEAIGNLLLYKLERLQYEQVFYPTPEQQQAMTPVERSLSGRRPGQLYGVLHLLRLISILPEMLSNCVGMDTQAINVILRHTEKLLLWLVDRIEDLLPHKVHKSYYTNTSSQYEGVALGL</sequence>